<dbReference type="EC" id="2.7.7.19"/>
<dbReference type="EMBL" id="X60307">
    <property type="protein sequence ID" value="CAA42852.1"/>
    <property type="molecule type" value="Genomic_DNA"/>
</dbReference>
<dbReference type="EMBL" id="X65124">
    <property type="protein sequence ID" value="CAA46250.1"/>
    <property type="molecule type" value="Genomic_DNA"/>
</dbReference>
<dbReference type="EMBL" id="Z28227">
    <property type="protein sequence ID" value="CAA82072.1"/>
    <property type="molecule type" value="Genomic_DNA"/>
</dbReference>
<dbReference type="EMBL" id="BK006944">
    <property type="protein sequence ID" value="DAA09158.1"/>
    <property type="molecule type" value="Genomic_DNA"/>
</dbReference>
<dbReference type="PIR" id="S19031">
    <property type="entry name" value="S19031"/>
</dbReference>
<dbReference type="RefSeq" id="NP_012927.3">
    <property type="nucleotide sequence ID" value="NM_001179792.3"/>
</dbReference>
<dbReference type="PDB" id="1FA0">
    <property type="method" value="X-ray"/>
    <property type="resolution" value="2.60 A"/>
    <property type="chains" value="A/B=1-537"/>
</dbReference>
<dbReference type="PDB" id="2HHP">
    <property type="method" value="X-ray"/>
    <property type="resolution" value="1.80 A"/>
    <property type="chains" value="A=1-530"/>
</dbReference>
<dbReference type="PDB" id="2O1P">
    <property type="method" value="X-ray"/>
    <property type="resolution" value="2.70 A"/>
    <property type="chains" value="A/B=1-538"/>
</dbReference>
<dbReference type="PDB" id="2Q66">
    <property type="method" value="X-ray"/>
    <property type="resolution" value="1.80 A"/>
    <property type="chains" value="A=5-529"/>
</dbReference>
<dbReference type="PDB" id="3C66">
    <property type="method" value="X-ray"/>
    <property type="resolution" value="2.60 A"/>
    <property type="chains" value="A/B=1-526"/>
</dbReference>
<dbReference type="PDBsum" id="1FA0"/>
<dbReference type="PDBsum" id="2HHP"/>
<dbReference type="PDBsum" id="2O1P"/>
<dbReference type="PDBsum" id="2Q66"/>
<dbReference type="PDBsum" id="3C66"/>
<dbReference type="SMR" id="P29468"/>
<dbReference type="BioGRID" id="34134">
    <property type="interactions" value="85"/>
</dbReference>
<dbReference type="ComplexPortal" id="CPX-1053">
    <property type="entry name" value="Cleavage and polyadenylation specificity factor complex"/>
</dbReference>
<dbReference type="DIP" id="DIP-2297N"/>
<dbReference type="FunCoup" id="P29468">
    <property type="interactions" value="1177"/>
</dbReference>
<dbReference type="IntAct" id="P29468">
    <property type="interactions" value="31"/>
</dbReference>
<dbReference type="MINT" id="P29468"/>
<dbReference type="STRING" id="4932.YKR002W"/>
<dbReference type="iPTMnet" id="P29468"/>
<dbReference type="PaxDb" id="4932-YKR002W"/>
<dbReference type="PeptideAtlas" id="P29468"/>
<dbReference type="EnsemblFungi" id="YKR002W_mRNA">
    <property type="protein sequence ID" value="YKR002W"/>
    <property type="gene ID" value="YKR002W"/>
</dbReference>
<dbReference type="GeneID" id="853871"/>
<dbReference type="KEGG" id="sce:YKR002W"/>
<dbReference type="AGR" id="SGD:S000001710"/>
<dbReference type="SGD" id="S000001710">
    <property type="gene designation" value="PAP1"/>
</dbReference>
<dbReference type="VEuPathDB" id="FungiDB:YKR002W"/>
<dbReference type="eggNOG" id="KOG2245">
    <property type="taxonomic scope" value="Eukaryota"/>
</dbReference>
<dbReference type="GeneTree" id="ENSGT00940000168779"/>
<dbReference type="HOGENOM" id="CLU_011511_4_1_1"/>
<dbReference type="InParanoid" id="P29468"/>
<dbReference type="OMA" id="EWKWPQP"/>
<dbReference type="OrthoDB" id="412748at2759"/>
<dbReference type="BioCyc" id="YEAST:G3O-31980-MONOMER"/>
<dbReference type="BRENDA" id="2.7.7.19">
    <property type="organism ID" value="984"/>
</dbReference>
<dbReference type="BioGRID-ORCS" id="853871">
    <property type="hits" value="3 hits in 10 CRISPR screens"/>
</dbReference>
<dbReference type="EvolutionaryTrace" id="P29468"/>
<dbReference type="PRO" id="PR:P29468"/>
<dbReference type="Proteomes" id="UP000002311">
    <property type="component" value="Chromosome XI"/>
</dbReference>
<dbReference type="RNAct" id="P29468">
    <property type="molecule type" value="protein"/>
</dbReference>
<dbReference type="GO" id="GO:0005847">
    <property type="term" value="C:mRNA cleavage and polyadenylation specificity factor complex"/>
    <property type="evidence" value="ECO:0000314"/>
    <property type="project" value="SGD"/>
</dbReference>
<dbReference type="GO" id="GO:0005634">
    <property type="term" value="C:nucleus"/>
    <property type="evidence" value="ECO:0000318"/>
    <property type="project" value="GO_Central"/>
</dbReference>
<dbReference type="GO" id="GO:0005524">
    <property type="term" value="F:ATP binding"/>
    <property type="evidence" value="ECO:0000314"/>
    <property type="project" value="UniProtKB"/>
</dbReference>
<dbReference type="GO" id="GO:0000287">
    <property type="term" value="F:magnesium ion binding"/>
    <property type="evidence" value="ECO:0000314"/>
    <property type="project" value="UniProtKB"/>
</dbReference>
<dbReference type="GO" id="GO:1990817">
    <property type="term" value="F:poly(A) RNA polymerase activity"/>
    <property type="evidence" value="ECO:0000314"/>
    <property type="project" value="UniProtKB"/>
</dbReference>
<dbReference type="GO" id="GO:0003723">
    <property type="term" value="F:RNA binding"/>
    <property type="evidence" value="ECO:0007669"/>
    <property type="project" value="UniProtKB-KW"/>
</dbReference>
<dbReference type="GO" id="GO:0031124">
    <property type="term" value="P:mRNA 3'-end processing"/>
    <property type="evidence" value="ECO:0000314"/>
    <property type="project" value="SGD"/>
</dbReference>
<dbReference type="GO" id="GO:0031126">
    <property type="term" value="P:sno(s)RNA 3'-end processing"/>
    <property type="evidence" value="ECO:0000316"/>
    <property type="project" value="SGD"/>
</dbReference>
<dbReference type="GO" id="GO:0030846">
    <property type="term" value="P:termination of RNA polymerase II transcription, poly(A)-coupled"/>
    <property type="evidence" value="ECO:0000303"/>
    <property type="project" value="ComplexPortal"/>
</dbReference>
<dbReference type="CDD" id="cd05402">
    <property type="entry name" value="NT_PAP_TUTase"/>
    <property type="match status" value="1"/>
</dbReference>
<dbReference type="FunFam" id="3.30.70.590:FF:000003">
    <property type="entry name" value="Poly(A) polymerase"/>
    <property type="match status" value="1"/>
</dbReference>
<dbReference type="FunFam" id="3.30.460.10:FF:000002">
    <property type="entry name" value="Poly(A) polymerase alpha, putative"/>
    <property type="match status" value="1"/>
</dbReference>
<dbReference type="FunFam" id="1.10.1410.10:FF:000001">
    <property type="entry name" value="Putative poly(A) polymerase gamma"/>
    <property type="match status" value="1"/>
</dbReference>
<dbReference type="Gene3D" id="1.10.1410.10">
    <property type="match status" value="1"/>
</dbReference>
<dbReference type="Gene3D" id="3.30.460.10">
    <property type="entry name" value="Beta Polymerase, domain 2"/>
    <property type="match status" value="1"/>
</dbReference>
<dbReference type="Gene3D" id="3.30.70.590">
    <property type="entry name" value="Poly(A) polymerase predicted RNA binding domain"/>
    <property type="match status" value="1"/>
</dbReference>
<dbReference type="InterPro" id="IPR043519">
    <property type="entry name" value="NT_sf"/>
</dbReference>
<dbReference type="InterPro" id="IPR011068">
    <property type="entry name" value="NuclTrfase_I-like_C"/>
</dbReference>
<dbReference type="InterPro" id="IPR007012">
    <property type="entry name" value="PolA_pol_cen_dom"/>
</dbReference>
<dbReference type="InterPro" id="IPR048840">
    <property type="entry name" value="PolA_pol_NTPase"/>
</dbReference>
<dbReference type="InterPro" id="IPR007010">
    <property type="entry name" value="PolA_pol_RNA-bd_dom"/>
</dbReference>
<dbReference type="InterPro" id="IPR014492">
    <property type="entry name" value="PolyA_polymerase"/>
</dbReference>
<dbReference type="PANTHER" id="PTHR10682">
    <property type="entry name" value="POLY A POLYMERASE"/>
    <property type="match status" value="1"/>
</dbReference>
<dbReference type="PANTHER" id="PTHR10682:SF10">
    <property type="entry name" value="POLYNUCLEOTIDE ADENYLYLTRANSFERASE"/>
    <property type="match status" value="1"/>
</dbReference>
<dbReference type="Pfam" id="PF04928">
    <property type="entry name" value="PAP_central"/>
    <property type="match status" value="1"/>
</dbReference>
<dbReference type="Pfam" id="PF20750">
    <property type="entry name" value="PAP_NTPase"/>
    <property type="match status" value="1"/>
</dbReference>
<dbReference type="Pfam" id="PF04926">
    <property type="entry name" value="PAP_RNA-bind"/>
    <property type="match status" value="1"/>
</dbReference>
<dbReference type="PIRSF" id="PIRSF018425">
    <property type="entry name" value="PolyA_polymerase"/>
    <property type="match status" value="1"/>
</dbReference>
<dbReference type="SUPFAM" id="SSF81301">
    <property type="entry name" value="Nucleotidyltransferase"/>
    <property type="match status" value="1"/>
</dbReference>
<dbReference type="SUPFAM" id="SSF55003">
    <property type="entry name" value="PAP/Archaeal CCA-adding enzyme, C-terminal domain"/>
    <property type="match status" value="1"/>
</dbReference>
<dbReference type="SUPFAM" id="SSF81631">
    <property type="entry name" value="PAP/OAS1 substrate-binding domain"/>
    <property type="match status" value="1"/>
</dbReference>
<reference key="1">
    <citation type="journal article" date="1991" name="Nature">
        <title>Cloning and expression of the essential gene for poly(A) polymerase from S. cerevisiae.</title>
        <authorList>
            <person name="Lingner J."/>
            <person name="Kellermann J."/>
            <person name="Keller W."/>
        </authorList>
    </citation>
    <scope>NUCLEOTIDE SEQUENCE [GENOMIC DNA]</scope>
    <scope>PARTIAL PROTEIN SEQUENCE</scope>
    <source>
        <strain>ATCC 204510 / AB320</strain>
    </source>
</reference>
<reference key="2">
    <citation type="journal article" date="1992" name="Yeast">
        <title>DNA sequencing and analysis of a 24.7 kb segment encompassing centromere CEN11 of Saccharomyces cerevisiae reveals nine previously unknown open reading frames.</title>
        <authorList>
            <person name="Duesterhoeft A."/>
            <person name="Philippsen P."/>
        </authorList>
    </citation>
    <scope>NUCLEOTIDE SEQUENCE [GENOMIC DNA]</scope>
    <source>
        <strain>ATCC 204508 / S288c</strain>
    </source>
</reference>
<reference key="3">
    <citation type="journal article" date="1994" name="Nature">
        <title>Complete DNA sequence of yeast chromosome XI.</title>
        <authorList>
            <person name="Dujon B."/>
            <person name="Alexandraki D."/>
            <person name="Andre B."/>
            <person name="Ansorge W."/>
            <person name="Baladron V."/>
            <person name="Ballesta J.P.G."/>
            <person name="Banrevi A."/>
            <person name="Bolle P.-A."/>
            <person name="Bolotin-Fukuhara M."/>
            <person name="Bossier P."/>
            <person name="Bou G."/>
            <person name="Boyer J."/>
            <person name="Buitrago M.J."/>
            <person name="Cheret G."/>
            <person name="Colleaux L."/>
            <person name="Daignan-Fornier B."/>
            <person name="del Rey F."/>
            <person name="Dion C."/>
            <person name="Domdey H."/>
            <person name="Duesterhoeft A."/>
            <person name="Duesterhus S."/>
            <person name="Entian K.-D."/>
            <person name="Erfle H."/>
            <person name="Esteban P.F."/>
            <person name="Feldmann H."/>
            <person name="Fernandes L."/>
            <person name="Fobo G.M."/>
            <person name="Fritz C."/>
            <person name="Fukuhara H."/>
            <person name="Gabel C."/>
            <person name="Gaillon L."/>
            <person name="Garcia-Cantalejo J.M."/>
            <person name="Garcia-Ramirez J.J."/>
            <person name="Gent M.E."/>
            <person name="Ghazvini M."/>
            <person name="Goffeau A."/>
            <person name="Gonzalez A."/>
            <person name="Grothues D."/>
            <person name="Guerreiro P."/>
            <person name="Hegemann J.H."/>
            <person name="Hewitt N."/>
            <person name="Hilger F."/>
            <person name="Hollenberg C.P."/>
            <person name="Horaitis O."/>
            <person name="Indge K.J."/>
            <person name="Jacquier A."/>
            <person name="James C.M."/>
            <person name="Jauniaux J.-C."/>
            <person name="Jimenez A."/>
            <person name="Keuchel H."/>
            <person name="Kirchrath L."/>
            <person name="Kleine K."/>
            <person name="Koetter P."/>
            <person name="Legrain P."/>
            <person name="Liebl S."/>
            <person name="Louis E.J."/>
            <person name="Maia e Silva A."/>
            <person name="Marck C."/>
            <person name="Monnier A.-L."/>
            <person name="Moestl D."/>
            <person name="Mueller S."/>
            <person name="Obermaier B."/>
            <person name="Oliver S.G."/>
            <person name="Pallier C."/>
            <person name="Pascolo S."/>
            <person name="Pfeiffer F."/>
            <person name="Philippsen P."/>
            <person name="Planta R.J."/>
            <person name="Pohl F.M."/>
            <person name="Pohl T.M."/>
            <person name="Poehlmann R."/>
            <person name="Portetelle D."/>
            <person name="Purnelle B."/>
            <person name="Puzos V."/>
            <person name="Ramezani Rad M."/>
            <person name="Rasmussen S.W."/>
            <person name="Remacha M.A."/>
            <person name="Revuelta J.L."/>
            <person name="Richard G.-F."/>
            <person name="Rieger M."/>
            <person name="Rodrigues-Pousada C."/>
            <person name="Rose M."/>
            <person name="Rupp T."/>
            <person name="Santos M.A."/>
            <person name="Schwager C."/>
            <person name="Sensen C."/>
            <person name="Skala J."/>
            <person name="Soares H."/>
            <person name="Sor F."/>
            <person name="Stegemann J."/>
            <person name="Tettelin H."/>
            <person name="Thierry A."/>
            <person name="Tzermia M."/>
            <person name="Urrestarazu L.A."/>
            <person name="van Dyck L."/>
            <person name="van Vliet-Reedijk J.C."/>
            <person name="Valens M."/>
            <person name="Vandenbol M."/>
            <person name="Vilela C."/>
            <person name="Vissers S."/>
            <person name="von Wettstein D."/>
            <person name="Voss H."/>
            <person name="Wiemann S."/>
            <person name="Xu G."/>
            <person name="Zimmermann J."/>
            <person name="Haasemann M."/>
            <person name="Becker I."/>
            <person name="Mewes H.-W."/>
        </authorList>
    </citation>
    <scope>NUCLEOTIDE SEQUENCE [LARGE SCALE GENOMIC DNA]</scope>
    <source>
        <strain>ATCC 204508 / S288c</strain>
    </source>
</reference>
<reference key="4">
    <citation type="journal article" date="2014" name="G3 (Bethesda)">
        <title>The reference genome sequence of Saccharomyces cerevisiae: Then and now.</title>
        <authorList>
            <person name="Engel S.R."/>
            <person name="Dietrich F.S."/>
            <person name="Fisk D.G."/>
            <person name="Binkley G."/>
            <person name="Balakrishnan R."/>
            <person name="Costanzo M.C."/>
            <person name="Dwight S.S."/>
            <person name="Hitz B.C."/>
            <person name="Karra K."/>
            <person name="Nash R.S."/>
            <person name="Weng S."/>
            <person name="Wong E.D."/>
            <person name="Lloyd P."/>
            <person name="Skrzypek M.S."/>
            <person name="Miyasato S.R."/>
            <person name="Simison M."/>
            <person name="Cherry J.M."/>
        </authorList>
    </citation>
    <scope>GENOME REANNOTATION</scope>
    <source>
        <strain>ATCC 204508 / S288c</strain>
    </source>
</reference>
<reference key="5">
    <citation type="journal article" date="1997" name="Mol. Gen. Genet.">
        <title>The Uba2 and Ufd1 proteins of Saccharomyces cerevisiae interact with poly(A) polymerase and affect the polyadenylation activity of cell extracts.</title>
        <authorList>
            <person name="del Olmo M."/>
            <person name="Mizrahi N."/>
            <person name="Gross S."/>
            <person name="Moore C.L."/>
        </authorList>
    </citation>
    <scope>INTERACTION WITH FIR1</scope>
</reference>
<reference key="6">
    <citation type="journal article" date="2000" name="Mol. Cell. Biol.">
        <title>A nuclear 3'-5' exonuclease involved in mRNA degradation interacts with Poly(A) polymerase and the hnRNA protein Npl3p.</title>
        <authorList>
            <person name="Burkard K.T.D."/>
            <person name="Butler J.S."/>
        </authorList>
    </citation>
    <scope>INTERACTION WITH RRP6</scope>
</reference>
<reference key="7">
    <citation type="journal article" date="2003" name="J. Biol. Chem.">
        <title>Organization and function of APT, a subcomplex of the yeast cleavage and polyadenylation factor involved in the formation of mRNA and small nucleolar RNA 3'-ends.</title>
        <authorList>
            <person name="Nedea E."/>
            <person name="He X."/>
            <person name="Kim M."/>
            <person name="Pootoolal J."/>
            <person name="Zhong G."/>
            <person name="Canadien V."/>
            <person name="Hughes T."/>
            <person name="Buratowski S."/>
            <person name="Moore C.L."/>
            <person name="Greenblatt J."/>
        </authorList>
    </citation>
    <scope>IDENTIFICATION IN THE CPF COMPLEX</scope>
    <scope>SUBCELLULAR LOCATION</scope>
    <scope>IDENTIFICATION BY MASS SPECTROMETRY</scope>
</reference>
<reference key="8">
    <citation type="journal article" date="2003" name="Nature">
        <title>Global analysis of protein localization in budding yeast.</title>
        <authorList>
            <person name="Huh W.-K."/>
            <person name="Falvo J.V."/>
            <person name="Gerke L.C."/>
            <person name="Carroll A.S."/>
            <person name="Howson R.W."/>
            <person name="Weissman J.S."/>
            <person name="O'Shea E.K."/>
        </authorList>
    </citation>
    <scope>SUBCELLULAR LOCATION [LARGE SCALE ANALYSIS]</scope>
</reference>
<reference key="9">
    <citation type="journal article" date="2003" name="Nature">
        <title>Global analysis of protein expression in yeast.</title>
        <authorList>
            <person name="Ghaemmaghami S."/>
            <person name="Huh W.-K."/>
            <person name="Bower K."/>
            <person name="Howson R.W."/>
            <person name="Belle A."/>
            <person name="Dephoure N."/>
            <person name="O'Shea E.K."/>
            <person name="Weissman J.S."/>
        </authorList>
    </citation>
    <scope>LEVEL OF PROTEIN EXPRESSION [LARGE SCALE ANALYSIS]</scope>
</reference>
<reference key="10">
    <citation type="journal article" date="2008" name="Mol. Cell. Proteomics">
        <title>A multidimensional chromatography technology for in-depth phosphoproteome analysis.</title>
        <authorList>
            <person name="Albuquerque C.P."/>
            <person name="Smolka M.B."/>
            <person name="Payne S.H."/>
            <person name="Bafna V."/>
            <person name="Eng J."/>
            <person name="Zhou H."/>
        </authorList>
    </citation>
    <scope>PHOSPHORYLATION [LARGE SCALE ANALYSIS] AT SER-452</scope>
    <scope>IDENTIFICATION BY MASS SPECTROMETRY [LARGE SCALE ANALYSIS]</scope>
</reference>
<reference key="11">
    <citation type="journal article" date="2009" name="Science">
        <title>Global analysis of Cdk1 substrate phosphorylation sites provides insights into evolution.</title>
        <authorList>
            <person name="Holt L.J."/>
            <person name="Tuch B.B."/>
            <person name="Villen J."/>
            <person name="Johnson A.D."/>
            <person name="Gygi S.P."/>
            <person name="Morgan D.O."/>
        </authorList>
    </citation>
    <scope>PHOSPHORYLATION [LARGE SCALE ANALYSIS] AT SER-550</scope>
    <scope>IDENTIFICATION BY MASS SPECTROMETRY [LARGE SCALE ANALYSIS]</scope>
</reference>
<reference key="12">
    <citation type="journal article" date="2000" name="Science">
        <title>Structure of yeast poly(A) polymerase alone and in complex with 3'-dATP.</title>
        <authorList>
            <person name="Bard J."/>
            <person name="Zhelkovsky A.M."/>
            <person name="Helmling S."/>
            <person name="Earnest T.N."/>
            <person name="Moore C.L."/>
            <person name="Bohm A."/>
        </authorList>
    </citation>
    <scope>X-RAY CRYSTALLOGRAPHY (2.6 ANGSTROMS) OF 1-537 IN COMPLEX WITH ATP ANALOG AND MANGANESE IONS</scope>
</reference>
<reference key="13">
    <citation type="journal article" date="2007" name="J. Mol. Biol.">
        <title>X-ray crystallographic and steady state fluorescence characterization of the protein dynamics of yeast polyadenylate polymerase.</title>
        <authorList>
            <person name="Balbo P.B."/>
            <person name="Toth J."/>
            <person name="Bohm A."/>
        </authorList>
    </citation>
    <scope>X-RAY CRYSTALLOGRAPHY (1.8 ANGSTROMS) OF 1-530</scope>
</reference>
<reference key="14">
    <citation type="journal article" date="2007" name="Structure">
        <title>Mechanism of poly(A) polymerase: structure of the enzyme-MgATP-RNA ternary complex and kinetic analysis.</title>
        <authorList>
            <person name="Balbo P.B."/>
            <person name="Bohm A."/>
        </authorList>
    </citation>
    <scope>X-RAY CRYSTALLOGRAPHY (1.8 ANGSTROMS) OF 5-529 OF MUTANT ALA-154 IN COMPLEX WITH ATP; MAGNESIUM IONS AND OLIGONUCLEOTIDE</scope>
    <scope>CATALYTIC ACTIVITY</scope>
    <scope>FUNCTION</scope>
    <scope>COFACTOR</scope>
    <scope>MUTAGENESIS OF ASP-154; ASN-189; LYS-215 AND ASN-226</scope>
</reference>
<reference key="15">
    <citation type="journal article" date="2008" name="Biochemistry">
        <title>Structure of yeast poly(A) polymerase in complex with a peptide from Fip1, an intrinsically disordered protein.</title>
        <authorList>
            <person name="Meinke G."/>
            <person name="Ezeokonkwo C."/>
            <person name="Balbo P."/>
            <person name="Stafford W."/>
            <person name="Moore C."/>
            <person name="Bohm A."/>
        </authorList>
    </citation>
    <scope>X-RAY CRYSTALLOGRAPHY (2.6 ANGSTROMS) OF 1-537 IN COMPLEX WITH FIP1</scope>
    <scope>FUNCTION</scope>
    <scope>CATALYTIC ACTIVITY</scope>
    <scope>INTERACTION WITH FIP1</scope>
    <scope>MUTAGENESIS OF CYS-485 AND VAL-489</scope>
</reference>
<feature type="chain" id="PRO_0000051621" description="Poly(A) polymerase">
    <location>
        <begin position="1"/>
        <end position="568"/>
    </location>
</feature>
<feature type="region of interest" description="Disordered" evidence="1">
    <location>
        <begin position="525"/>
        <end position="568"/>
    </location>
</feature>
<feature type="compositionally biased region" description="Basic and acidic residues" evidence="1">
    <location>
        <begin position="536"/>
        <end position="550"/>
    </location>
</feature>
<feature type="binding site" evidence="7">
    <location>
        <begin position="87"/>
        <end position="89"/>
    </location>
    <ligand>
        <name>ATP</name>
        <dbReference type="ChEBI" id="CHEBI:30616"/>
    </ligand>
</feature>
<feature type="binding site" evidence="7">
    <location>
        <begin position="99"/>
        <end position="102"/>
    </location>
    <ligand>
        <name>ATP</name>
        <dbReference type="ChEBI" id="CHEBI:30616"/>
    </ligand>
</feature>
<feature type="binding site" evidence="7">
    <location>
        <begin position="100"/>
        <end position="102"/>
    </location>
    <ligand>
        <name>ATP</name>
        <dbReference type="ChEBI" id="CHEBI:30616"/>
    </ligand>
</feature>
<feature type="binding site">
    <location>
        <position position="100"/>
    </location>
    <ligand>
        <name>Mg(2+)</name>
        <dbReference type="ChEBI" id="CHEBI:18420"/>
        <label>1</label>
        <note>catalytic</note>
    </ligand>
</feature>
<feature type="binding site">
    <location>
        <position position="100"/>
    </location>
    <ligand>
        <name>Mg(2+)</name>
        <dbReference type="ChEBI" id="CHEBI:18420"/>
        <label>2</label>
        <note>catalytic</note>
    </ligand>
</feature>
<feature type="binding site">
    <location>
        <position position="102"/>
    </location>
    <ligand>
        <name>Mg(2+)</name>
        <dbReference type="ChEBI" id="CHEBI:18420"/>
        <label>1</label>
        <note>catalytic</note>
    </ligand>
</feature>
<feature type="binding site">
    <location>
        <position position="102"/>
    </location>
    <ligand>
        <name>Mg(2+)</name>
        <dbReference type="ChEBI" id="CHEBI:18420"/>
        <label>2</label>
        <note>catalytic</note>
    </ligand>
</feature>
<feature type="binding site" evidence="7">
    <location>
        <position position="154"/>
    </location>
    <ligand>
        <name>ATP</name>
        <dbReference type="ChEBI" id="CHEBI:30616"/>
    </ligand>
</feature>
<feature type="binding site">
    <location>
        <position position="154"/>
    </location>
    <ligand>
        <name>Mg(2+)</name>
        <dbReference type="ChEBI" id="CHEBI:18420"/>
        <label>2</label>
        <note>catalytic</note>
    </ligand>
</feature>
<feature type="binding site" evidence="7">
    <location>
        <position position="215"/>
    </location>
    <ligand>
        <name>ATP</name>
        <dbReference type="ChEBI" id="CHEBI:30616"/>
    </ligand>
</feature>
<feature type="binding site" evidence="7">
    <location>
        <position position="224"/>
    </location>
    <ligand>
        <name>ATP</name>
        <dbReference type="ChEBI" id="CHEBI:30616"/>
    </ligand>
</feature>
<feature type="binding site" evidence="7">
    <location>
        <begin position="233"/>
        <end position="234"/>
    </location>
    <ligand>
        <name>ATP</name>
        <dbReference type="ChEBI" id="CHEBI:30616"/>
    </ligand>
</feature>
<feature type="site" description="Interaction with RNA">
    <location>
        <position position="140"/>
    </location>
</feature>
<feature type="site" description="Interaction with RNA">
    <location>
        <position position="145"/>
    </location>
</feature>
<feature type="site" description="Interaction with RNA">
    <location>
        <position position="294"/>
    </location>
</feature>
<feature type="site" description="Interaction with RNA">
    <location>
        <position position="314"/>
    </location>
</feature>
<feature type="site" description="Interaction with RNA">
    <location>
        <position position="315"/>
    </location>
</feature>
<feature type="site" description="Interaction with RNA">
    <location>
        <position position="387"/>
    </location>
</feature>
<feature type="site" description="Interaction with RNA">
    <location>
        <position position="392"/>
    </location>
</feature>
<feature type="site" description="Interaction with RNA">
    <location>
        <position position="487"/>
    </location>
</feature>
<feature type="modified residue" description="Phosphoserine" evidence="11">
    <location>
        <position position="452"/>
    </location>
</feature>
<feature type="modified residue" description="Phosphoserine" evidence="12">
    <location>
        <position position="550"/>
    </location>
</feature>
<feature type="mutagenesis site" description="Loss of enzyme activity." evidence="7">
    <original>D</original>
    <variation>A</variation>
    <location>
        <position position="154"/>
    </location>
</feature>
<feature type="mutagenesis site" description="Slightly reduced rate of adenylyltransfer." evidence="7">
    <original>N</original>
    <variation>A</variation>
    <location>
        <position position="189"/>
    </location>
</feature>
<feature type="mutagenesis site" description="Reduces rate of adenylyltransfer about four-fold." evidence="7">
    <original>K</original>
    <variation>A</variation>
    <location>
        <position position="215"/>
    </location>
</feature>
<feature type="mutagenesis site" description="Reduces rate of adenylyltransfer by half." evidence="7">
    <original>N</original>
    <variation>A</variation>
    <location>
        <position position="226"/>
    </location>
</feature>
<feature type="mutagenesis site" description="Abolishes interaction with FIP1; when associated with Y-489." evidence="8">
    <original>C</original>
    <variation>R</variation>
    <location>
        <position position="485"/>
    </location>
</feature>
<feature type="mutagenesis site" description="Abolishes interaction with FIP1; when associated with R-485." evidence="8">
    <original>V</original>
    <variation>Y</variation>
    <location>
        <position position="489"/>
    </location>
</feature>
<feature type="helix" evidence="14">
    <location>
        <begin position="5"/>
        <end position="7"/>
    </location>
</feature>
<feature type="strand" evidence="16">
    <location>
        <begin position="8"/>
        <end position="10"/>
    </location>
</feature>
<feature type="helix" evidence="14">
    <location>
        <begin position="20"/>
        <end position="35"/>
    </location>
</feature>
<feature type="helix" evidence="14">
    <location>
        <begin position="42"/>
        <end position="69"/>
    </location>
</feature>
<feature type="helix" evidence="14">
    <location>
        <begin position="74"/>
        <end position="79"/>
    </location>
</feature>
<feature type="strand" evidence="14">
    <location>
        <begin position="83"/>
        <end position="87"/>
    </location>
</feature>
<feature type="helix" evidence="14">
    <location>
        <begin position="88"/>
        <end position="92"/>
    </location>
</feature>
<feature type="strand" evidence="14">
    <location>
        <begin position="101"/>
        <end position="107"/>
    </location>
</feature>
<feature type="helix" evidence="14">
    <location>
        <begin position="113"/>
        <end position="125"/>
    </location>
</feature>
<feature type="strand" evidence="14">
    <location>
        <begin position="130"/>
        <end position="136"/>
    </location>
</feature>
<feature type="strand" evidence="14">
    <location>
        <begin position="139"/>
        <end position="141"/>
    </location>
</feature>
<feature type="strand" evidence="14">
    <location>
        <begin position="143"/>
        <end position="148"/>
    </location>
</feature>
<feature type="strand" evidence="14">
    <location>
        <begin position="151"/>
        <end position="159"/>
    </location>
</feature>
<feature type="strand" evidence="14">
    <location>
        <begin position="161"/>
        <end position="163"/>
    </location>
</feature>
<feature type="helix" evidence="14">
    <location>
        <begin position="174"/>
        <end position="177"/>
    </location>
</feature>
<feature type="helix" evidence="14">
    <location>
        <begin position="182"/>
        <end position="200"/>
    </location>
</feature>
<feature type="helix" evidence="14">
    <location>
        <begin position="204"/>
        <end position="220"/>
    </location>
</feature>
<feature type="helix" evidence="14">
    <location>
        <begin position="226"/>
        <end position="228"/>
    </location>
</feature>
<feature type="helix" evidence="14">
    <location>
        <begin position="233"/>
        <end position="246"/>
    </location>
</feature>
<feature type="helix" evidence="14">
    <location>
        <begin position="252"/>
        <end position="265"/>
    </location>
</feature>
<feature type="strand" evidence="14">
    <location>
        <begin position="272"/>
        <end position="275"/>
    </location>
</feature>
<feature type="strand" evidence="13">
    <location>
        <begin position="281"/>
        <end position="283"/>
    </location>
</feature>
<feature type="turn" evidence="14">
    <location>
        <begin position="289"/>
        <end position="291"/>
    </location>
</feature>
<feature type="helix" evidence="14">
    <location>
        <begin position="293"/>
        <end position="296"/>
    </location>
</feature>
<feature type="strand" evidence="14">
    <location>
        <begin position="305"/>
        <end position="308"/>
    </location>
</feature>
<feature type="turn" evidence="14">
    <location>
        <begin position="312"/>
        <end position="315"/>
    </location>
</feature>
<feature type="helix" evidence="14">
    <location>
        <begin position="318"/>
        <end position="339"/>
    </location>
</feature>
<feature type="helix" evidence="14">
    <location>
        <begin position="345"/>
        <end position="348"/>
    </location>
</feature>
<feature type="helix" evidence="14">
    <location>
        <begin position="354"/>
        <end position="357"/>
    </location>
</feature>
<feature type="strand" evidence="14">
    <location>
        <begin position="359"/>
        <end position="370"/>
    </location>
</feature>
<feature type="helix" evidence="14">
    <location>
        <begin position="372"/>
        <end position="394"/>
    </location>
</feature>
<feature type="strand" evidence="14">
    <location>
        <begin position="399"/>
        <end position="404"/>
    </location>
</feature>
<feature type="strand" evidence="14">
    <location>
        <begin position="409"/>
        <end position="414"/>
    </location>
</feature>
<feature type="strand" evidence="14">
    <location>
        <begin position="417"/>
        <end position="419"/>
    </location>
</feature>
<feature type="helix" evidence="14">
    <location>
        <begin position="420"/>
        <end position="427"/>
    </location>
</feature>
<feature type="strand" evidence="13">
    <location>
        <begin position="428"/>
        <end position="430"/>
    </location>
</feature>
<feature type="helix" evidence="14">
    <location>
        <begin position="431"/>
        <end position="434"/>
    </location>
</feature>
<feature type="helix" evidence="13">
    <location>
        <begin position="435"/>
        <end position="439"/>
    </location>
</feature>
<feature type="turn" evidence="16">
    <location>
        <begin position="444"/>
        <end position="446"/>
    </location>
</feature>
<feature type="helix" evidence="16">
    <location>
        <begin position="451"/>
        <end position="455"/>
    </location>
</feature>
<feature type="strand" evidence="14">
    <location>
        <begin position="458"/>
        <end position="470"/>
    </location>
</feature>
<feature type="strand" evidence="15">
    <location>
        <begin position="475"/>
        <end position="477"/>
    </location>
</feature>
<feature type="helix" evidence="14">
    <location>
        <begin position="482"/>
        <end position="494"/>
    </location>
</feature>
<feature type="turn" evidence="14">
    <location>
        <begin position="497"/>
        <end position="500"/>
    </location>
</feature>
<feature type="strand" evidence="14">
    <location>
        <begin position="502"/>
        <end position="513"/>
    </location>
</feature>
<feature type="helix" evidence="14">
    <location>
        <begin position="514"/>
        <end position="516"/>
    </location>
</feature>
<feature type="helix" evidence="14">
    <location>
        <begin position="519"/>
        <end position="521"/>
    </location>
</feature>
<accession>P29468</accession>
<accession>D6VXT8</accession>
<keyword id="KW-0002">3D-structure</keyword>
<keyword id="KW-0067">ATP-binding</keyword>
<keyword id="KW-0903">Direct protein sequencing</keyword>
<keyword id="KW-0460">Magnesium</keyword>
<keyword id="KW-0464">Manganese</keyword>
<keyword id="KW-0479">Metal-binding</keyword>
<keyword id="KW-0507">mRNA processing</keyword>
<keyword id="KW-0547">Nucleotide-binding</keyword>
<keyword id="KW-0539">Nucleus</keyword>
<keyword id="KW-0597">Phosphoprotein</keyword>
<keyword id="KW-1185">Reference proteome</keyword>
<keyword id="KW-0694">RNA-binding</keyword>
<keyword id="KW-0808">Transferase</keyword>
<gene>
    <name type="primary">PAP1</name>
    <name type="ordered locus">YKR002W</name>
</gene>
<proteinExistence type="evidence at protein level"/>
<name>PAP_YEAST</name>
<sequence length="568" mass="64552">MSSQKVFGITGPVSTVGATAAENKLNDSLIQELKKEGSFETEQETANRVQVLKILQELAQRFVYEVSKKKNMSDGMARDAGGKIFTYGSYRLGVHGPGSDIDTLVVVPKHVTREDFFTVFDSLLRERKELDEIAPVPDAFVPIIKIKFSGISIDLICARLDQPQVPLSLTLSDKNLLRNLDEKDLRALNGTRVTDEILELVPKPNVFRIALRAIKLWAQRRAVYANIFGFPGGVAWAMLVARICQLYPNACSAVILNRFFIILSEWNWPQPVILKPIEDGPLQVRVWNPKIYAQDRSHRMPVITPAYPSMCATHNITESTKKVILQEFVRGVQITNDIFSNKKSWANLFEKNDFFFRYKFYLEITAYTRGSDEQHLKWSGLVESKVRLLVMKLEVLAGIKIAHPFTKPFESSYCCPTEDDYEMIQDKYGSHKTETALNALKLVTDENKEEESIKDAPKAYLSTMYIGLDFNIENKKEKVDIHIPCTEFVNLCRSFNEDYGDHKVFNLALRFVKGYDLPDEVFDENEKRPSKKSKRKNLDARHETVKRSKSDAASGDNINGTTAAVDVN</sequence>
<organism>
    <name type="scientific">Saccharomyces cerevisiae (strain ATCC 204508 / S288c)</name>
    <name type="common">Baker's yeast</name>
    <dbReference type="NCBI Taxonomy" id="559292"/>
    <lineage>
        <taxon>Eukaryota</taxon>
        <taxon>Fungi</taxon>
        <taxon>Dikarya</taxon>
        <taxon>Ascomycota</taxon>
        <taxon>Saccharomycotina</taxon>
        <taxon>Saccharomycetes</taxon>
        <taxon>Saccharomycetales</taxon>
        <taxon>Saccharomycetaceae</taxon>
        <taxon>Saccharomyces</taxon>
    </lineage>
</organism>
<comment type="function">
    <text evidence="7 8">Polymerase component of the cleavage and polyadenylation factor (CPF) complex, which plays a key role in polyadenylation-dependent pre-mRNA 3'-end formation and cooperates with cleavage factors including the CFIA complex and NAB4/CFIB.</text>
</comment>
<comment type="catalytic activity">
    <reaction evidence="7 8">
        <text>RNA(n) + ATP = RNA(n)-3'-adenine ribonucleotide + diphosphate</text>
        <dbReference type="Rhea" id="RHEA:11332"/>
        <dbReference type="Rhea" id="RHEA-COMP:14527"/>
        <dbReference type="Rhea" id="RHEA-COMP:17347"/>
        <dbReference type="ChEBI" id="CHEBI:30616"/>
        <dbReference type="ChEBI" id="CHEBI:33019"/>
        <dbReference type="ChEBI" id="CHEBI:140395"/>
        <dbReference type="ChEBI" id="CHEBI:173115"/>
        <dbReference type="EC" id="2.7.7.19"/>
    </reaction>
</comment>
<comment type="cofactor">
    <cofactor evidence="7">
        <name>Mg(2+)</name>
        <dbReference type="ChEBI" id="CHEBI:18420"/>
    </cofactor>
    <cofactor evidence="7">
        <name>Mn(2+)</name>
        <dbReference type="ChEBI" id="CHEBI:29035"/>
    </cofactor>
    <text evidence="7">Binds 2 magnesium ions. Also active with manganese.</text>
</comment>
<comment type="subunit">
    <text evidence="2 3 4 7 8 9">Component of the cleavage and polyadenylation factor (CPF) complex, which is composed of PTI1, SYC1, SSU72, GLC7, MPE1, REF2, PFS2, PTA1, YSH1/BRR5, SWD2, CFT2/YDH1, YTH1, CFT1/YHH1, FIP1 and PAP1. Interacts with FIR1 and RRP6.</text>
</comment>
<comment type="interaction">
    <interactant intactId="EBI-12917">
        <id>P29468</id>
    </interactant>
    <interactant intactId="EBI-32872">
        <id>Q06632</id>
        <label>CFT1</label>
    </interactant>
    <organismsDiffer>false</organismsDiffer>
    <experiments>6</experiments>
</comment>
<comment type="interaction">
    <interactant intactId="EBI-12917">
        <id>P29468</id>
    </interactant>
    <interactant intactId="EBI-6940">
        <id>P45976</id>
        <label>FIP1</label>
    </interactant>
    <organismsDiffer>false</organismsDiffer>
    <experiments>10</experiments>
</comment>
<comment type="interaction">
    <interactant intactId="EBI-12917">
        <id>P29468</id>
    </interactant>
    <interactant intactId="EBI-27955">
        <id>Q03735</id>
        <label>NAB6</label>
    </interactant>
    <organismsDiffer>false</organismsDiffer>
    <experiments>3</experiments>
</comment>
<comment type="interaction">
    <interactant intactId="EBI-12917">
        <id>P29468</id>
    </interactant>
    <interactant intactId="EBI-14145">
        <id>Q01329</id>
        <label>PTA1</label>
    </interactant>
    <organismsDiffer>false</organismsDiffer>
    <experiments>9</experiments>
</comment>
<comment type="subcellular location">
    <subcellularLocation>
        <location evidence="4 5">Nucleus</location>
    </subcellularLocation>
</comment>
<comment type="miscellaneous">
    <text evidence="6">Present with 17100 molecules/cell in log phase SD medium.</text>
</comment>
<comment type="similarity">
    <text evidence="10">Belongs to the poly(A) polymerase family.</text>
</comment>
<evidence type="ECO:0000256" key="1">
    <source>
        <dbReference type="SAM" id="MobiDB-lite"/>
    </source>
</evidence>
<evidence type="ECO:0000269" key="2">
    <source>
    </source>
</evidence>
<evidence type="ECO:0000269" key="3">
    <source>
    </source>
</evidence>
<evidence type="ECO:0000269" key="4">
    <source>
    </source>
</evidence>
<evidence type="ECO:0000269" key="5">
    <source>
    </source>
</evidence>
<evidence type="ECO:0000269" key="6">
    <source>
    </source>
</evidence>
<evidence type="ECO:0000269" key="7">
    <source>
    </source>
</evidence>
<evidence type="ECO:0000269" key="8">
    <source>
    </source>
</evidence>
<evidence type="ECO:0000269" key="9">
    <source>
    </source>
</evidence>
<evidence type="ECO:0000305" key="10"/>
<evidence type="ECO:0007744" key="11">
    <source>
    </source>
</evidence>
<evidence type="ECO:0007744" key="12">
    <source>
    </source>
</evidence>
<evidence type="ECO:0007829" key="13">
    <source>
        <dbReference type="PDB" id="1FA0"/>
    </source>
</evidence>
<evidence type="ECO:0007829" key="14">
    <source>
        <dbReference type="PDB" id="2HHP"/>
    </source>
</evidence>
<evidence type="ECO:0007829" key="15">
    <source>
        <dbReference type="PDB" id="2O1P"/>
    </source>
</evidence>
<evidence type="ECO:0007829" key="16">
    <source>
        <dbReference type="PDB" id="2Q66"/>
    </source>
</evidence>
<protein>
    <recommendedName>
        <fullName>Poly(A) polymerase</fullName>
        <shortName>PAP</shortName>
        <ecNumber>2.7.7.19</ecNumber>
    </recommendedName>
    <alternativeName>
        <fullName>Polynucleotide adenylyltransferase</fullName>
    </alternativeName>
</protein>